<gene>
    <name evidence="1" type="primary">kdpC</name>
    <name type="ordered locus">BCQ_0831</name>
</gene>
<dbReference type="EMBL" id="CP000227">
    <property type="protein sequence ID" value="ACM11261.1"/>
    <property type="molecule type" value="Genomic_DNA"/>
</dbReference>
<dbReference type="SMR" id="B9IQY6"/>
<dbReference type="KEGG" id="bcq:BCQ_0831"/>
<dbReference type="HOGENOM" id="CLU_077094_1_0_9"/>
<dbReference type="Proteomes" id="UP000000441">
    <property type="component" value="Chromosome"/>
</dbReference>
<dbReference type="GO" id="GO:0005886">
    <property type="term" value="C:plasma membrane"/>
    <property type="evidence" value="ECO:0007669"/>
    <property type="project" value="UniProtKB-SubCell"/>
</dbReference>
<dbReference type="GO" id="GO:0005524">
    <property type="term" value="F:ATP binding"/>
    <property type="evidence" value="ECO:0007669"/>
    <property type="project" value="UniProtKB-UniRule"/>
</dbReference>
<dbReference type="GO" id="GO:0008556">
    <property type="term" value="F:P-type potassium transmembrane transporter activity"/>
    <property type="evidence" value="ECO:0007669"/>
    <property type="project" value="InterPro"/>
</dbReference>
<dbReference type="HAMAP" id="MF_00276">
    <property type="entry name" value="KdpC"/>
    <property type="match status" value="1"/>
</dbReference>
<dbReference type="InterPro" id="IPR003820">
    <property type="entry name" value="KdpC"/>
</dbReference>
<dbReference type="NCBIfam" id="TIGR00681">
    <property type="entry name" value="kdpC"/>
    <property type="match status" value="1"/>
</dbReference>
<dbReference type="NCBIfam" id="NF001454">
    <property type="entry name" value="PRK00315.1"/>
    <property type="match status" value="1"/>
</dbReference>
<dbReference type="NCBIfam" id="NF010601">
    <property type="entry name" value="PRK13997.1"/>
    <property type="match status" value="1"/>
</dbReference>
<dbReference type="PANTHER" id="PTHR30042">
    <property type="entry name" value="POTASSIUM-TRANSPORTING ATPASE C CHAIN"/>
    <property type="match status" value="1"/>
</dbReference>
<dbReference type="PANTHER" id="PTHR30042:SF2">
    <property type="entry name" value="POTASSIUM-TRANSPORTING ATPASE KDPC SUBUNIT"/>
    <property type="match status" value="1"/>
</dbReference>
<dbReference type="Pfam" id="PF02669">
    <property type="entry name" value="KdpC"/>
    <property type="match status" value="1"/>
</dbReference>
<dbReference type="PIRSF" id="PIRSF001296">
    <property type="entry name" value="K_ATPase_KdpC"/>
    <property type="match status" value="1"/>
</dbReference>
<proteinExistence type="inferred from homology"/>
<feature type="chain" id="PRO_1000132513" description="Potassium-transporting ATPase KdpC subunit">
    <location>
        <begin position="1"/>
        <end position="193"/>
    </location>
</feature>
<feature type="transmembrane region" description="Helical" evidence="1">
    <location>
        <begin position="14"/>
        <end position="34"/>
    </location>
</feature>
<name>KDPC_BACCQ</name>
<keyword id="KW-0067">ATP-binding</keyword>
<keyword id="KW-1003">Cell membrane</keyword>
<keyword id="KW-0406">Ion transport</keyword>
<keyword id="KW-0472">Membrane</keyword>
<keyword id="KW-0547">Nucleotide-binding</keyword>
<keyword id="KW-0630">Potassium</keyword>
<keyword id="KW-0633">Potassium transport</keyword>
<keyword id="KW-0812">Transmembrane</keyword>
<keyword id="KW-1133">Transmembrane helix</keyword>
<keyword id="KW-0813">Transport</keyword>
<sequence length="193" mass="21237">MAKKQSILSPIIRITFTFLVLCGLVYPLIVTGIAQAVMKDNADGSLIYNDKNEVIGSKLIGQNFTDPRYFHGRVSSIEYKAEASGSNNYAPSNPDLEKRVEKSIEEWKKQNPSVPVTEVPIDLVTNSGSGLDPDISPKAASVQVERISKITNIPKETLNQLIKEQTEGAALGLFGENRVNVLKLNLELQKLLK</sequence>
<comment type="function">
    <text evidence="1">Part of the high-affinity ATP-driven potassium transport (or Kdp) system, which catalyzes the hydrolysis of ATP coupled with the electrogenic transport of potassium into the cytoplasm. This subunit acts as a catalytic chaperone that increases the ATP-binding affinity of the ATP-hydrolyzing subunit KdpB by the formation of a transient KdpB/KdpC/ATP ternary complex.</text>
</comment>
<comment type="subunit">
    <text evidence="1">The system is composed of three essential subunits: KdpA, KdpB and KdpC.</text>
</comment>
<comment type="subcellular location">
    <subcellularLocation>
        <location evidence="1">Cell membrane</location>
        <topology evidence="1">Single-pass membrane protein</topology>
    </subcellularLocation>
</comment>
<comment type="similarity">
    <text evidence="1">Belongs to the KdpC family.</text>
</comment>
<accession>B9IQY6</accession>
<organism>
    <name type="scientific">Bacillus cereus (strain Q1)</name>
    <dbReference type="NCBI Taxonomy" id="361100"/>
    <lineage>
        <taxon>Bacteria</taxon>
        <taxon>Bacillati</taxon>
        <taxon>Bacillota</taxon>
        <taxon>Bacilli</taxon>
        <taxon>Bacillales</taxon>
        <taxon>Bacillaceae</taxon>
        <taxon>Bacillus</taxon>
        <taxon>Bacillus cereus group</taxon>
    </lineage>
</organism>
<reference key="1">
    <citation type="journal article" date="2009" name="J. Bacteriol.">
        <title>Complete genome sequence of the extremophilic Bacillus cereus strain Q1 with industrial applications.</title>
        <authorList>
            <person name="Xiong Z."/>
            <person name="Jiang Y."/>
            <person name="Qi D."/>
            <person name="Lu H."/>
            <person name="Yang F."/>
            <person name="Yang J."/>
            <person name="Chen L."/>
            <person name="Sun L."/>
            <person name="Xu X."/>
            <person name="Xue Y."/>
            <person name="Zhu Y."/>
            <person name="Jin Q."/>
        </authorList>
    </citation>
    <scope>NUCLEOTIDE SEQUENCE [LARGE SCALE GENOMIC DNA]</scope>
    <source>
        <strain>Q1</strain>
    </source>
</reference>
<evidence type="ECO:0000255" key="1">
    <source>
        <dbReference type="HAMAP-Rule" id="MF_00276"/>
    </source>
</evidence>
<protein>
    <recommendedName>
        <fullName evidence="1">Potassium-transporting ATPase KdpC subunit</fullName>
    </recommendedName>
    <alternativeName>
        <fullName evidence="1">ATP phosphohydrolase [potassium-transporting] C chain</fullName>
    </alternativeName>
    <alternativeName>
        <fullName evidence="1">Potassium-binding and translocating subunit C</fullName>
    </alternativeName>
    <alternativeName>
        <fullName evidence="1">Potassium-translocating ATPase C chain</fullName>
    </alternativeName>
</protein>